<dbReference type="EC" id="1.14.11.55" evidence="2"/>
<dbReference type="EMBL" id="BX640446">
    <property type="protein sequence ID" value="CAE33709.1"/>
    <property type="molecule type" value="Genomic_DNA"/>
</dbReference>
<dbReference type="SMR" id="Q7WHJ0"/>
<dbReference type="KEGG" id="bbr:BB3217"/>
<dbReference type="eggNOG" id="COG5285">
    <property type="taxonomic scope" value="Bacteria"/>
</dbReference>
<dbReference type="HOGENOM" id="CLU_048953_5_0_4"/>
<dbReference type="Proteomes" id="UP000001027">
    <property type="component" value="Chromosome"/>
</dbReference>
<dbReference type="GO" id="GO:0016706">
    <property type="term" value="F:2-oxoglutarate-dependent dioxygenase activity"/>
    <property type="evidence" value="ECO:0000250"/>
    <property type="project" value="UniProtKB"/>
</dbReference>
<dbReference type="GO" id="GO:0005506">
    <property type="term" value="F:iron ion binding"/>
    <property type="evidence" value="ECO:0000250"/>
    <property type="project" value="UniProtKB"/>
</dbReference>
<dbReference type="GO" id="GO:0042400">
    <property type="term" value="P:ectoine catabolic process"/>
    <property type="evidence" value="ECO:0000250"/>
    <property type="project" value="UniProtKB"/>
</dbReference>
<dbReference type="FunFam" id="2.60.120.620:FF:000016">
    <property type="entry name" value="Ectoine hydroxylase"/>
    <property type="match status" value="1"/>
</dbReference>
<dbReference type="Gene3D" id="2.60.120.620">
    <property type="entry name" value="q2cbj1_9rhob like domain"/>
    <property type="match status" value="1"/>
</dbReference>
<dbReference type="InterPro" id="IPR012774">
    <property type="entry name" value="EctD"/>
</dbReference>
<dbReference type="InterPro" id="IPR008775">
    <property type="entry name" value="Phytyl_CoA_dOase-like"/>
</dbReference>
<dbReference type="NCBIfam" id="TIGR02408">
    <property type="entry name" value="ectoine_ThpD"/>
    <property type="match status" value="1"/>
</dbReference>
<dbReference type="PANTHER" id="PTHR20883:SF48">
    <property type="entry name" value="ECTOINE DIOXYGENASE"/>
    <property type="match status" value="1"/>
</dbReference>
<dbReference type="PANTHER" id="PTHR20883">
    <property type="entry name" value="PHYTANOYL-COA DIOXYGENASE DOMAIN CONTAINING 1"/>
    <property type="match status" value="1"/>
</dbReference>
<dbReference type="Pfam" id="PF05721">
    <property type="entry name" value="PhyH"/>
    <property type="match status" value="1"/>
</dbReference>
<dbReference type="SUPFAM" id="SSF51197">
    <property type="entry name" value="Clavaminate synthase-like"/>
    <property type="match status" value="1"/>
</dbReference>
<reference key="1">
    <citation type="journal article" date="2003" name="Nat. Genet.">
        <title>Comparative analysis of the genome sequences of Bordetella pertussis, Bordetella parapertussis and Bordetella bronchiseptica.</title>
        <authorList>
            <person name="Parkhill J."/>
            <person name="Sebaihia M."/>
            <person name="Preston A."/>
            <person name="Murphy L.D."/>
            <person name="Thomson N.R."/>
            <person name="Harris D.E."/>
            <person name="Holden M.T.G."/>
            <person name="Churcher C.M."/>
            <person name="Bentley S.D."/>
            <person name="Mungall K.L."/>
            <person name="Cerdeno-Tarraga A.-M."/>
            <person name="Temple L."/>
            <person name="James K.D."/>
            <person name="Harris B."/>
            <person name="Quail M.A."/>
            <person name="Achtman M."/>
            <person name="Atkin R."/>
            <person name="Baker S."/>
            <person name="Basham D."/>
            <person name="Bason N."/>
            <person name="Cherevach I."/>
            <person name="Chillingworth T."/>
            <person name="Collins M."/>
            <person name="Cronin A."/>
            <person name="Davis P."/>
            <person name="Doggett J."/>
            <person name="Feltwell T."/>
            <person name="Goble A."/>
            <person name="Hamlin N."/>
            <person name="Hauser H."/>
            <person name="Holroyd S."/>
            <person name="Jagels K."/>
            <person name="Leather S."/>
            <person name="Moule S."/>
            <person name="Norberczak H."/>
            <person name="O'Neil S."/>
            <person name="Ormond D."/>
            <person name="Price C."/>
            <person name="Rabbinowitsch E."/>
            <person name="Rutter S."/>
            <person name="Sanders M."/>
            <person name="Saunders D."/>
            <person name="Seeger K."/>
            <person name="Sharp S."/>
            <person name="Simmonds M."/>
            <person name="Skelton J."/>
            <person name="Squares R."/>
            <person name="Squares S."/>
            <person name="Stevens K."/>
            <person name="Unwin L."/>
            <person name="Whitehead S."/>
            <person name="Barrell B.G."/>
            <person name="Maskell D.J."/>
        </authorList>
    </citation>
    <scope>NUCLEOTIDE SEQUENCE [LARGE SCALE GENOMIC DNA]</scope>
    <source>
        <strain>ATCC BAA-588 / NCTC 13252 / RB50</strain>
    </source>
</reference>
<name>ECTD_BORBR</name>
<comment type="function">
    <text evidence="2">Involved in the biosynthesis of 5-hydroxyectoine, called compatible solute, which helps organisms to survive extreme osmotic stress by acting as a highly soluble organic osmolyte. Catalyzes the 2-oxoglutarate-dependent selective hydroxylation of L-ectoine to yield (4S,5S)-5-hydroxyectoine.</text>
</comment>
<comment type="catalytic activity">
    <reaction evidence="2">
        <text>L-ectoine + 2-oxoglutarate + O2 = 5-hydroxyectoine + succinate + CO2</text>
        <dbReference type="Rhea" id="RHEA:45740"/>
        <dbReference type="ChEBI" id="CHEBI:15379"/>
        <dbReference type="ChEBI" id="CHEBI:16526"/>
        <dbReference type="ChEBI" id="CHEBI:16810"/>
        <dbReference type="ChEBI" id="CHEBI:30031"/>
        <dbReference type="ChEBI" id="CHEBI:58515"/>
        <dbReference type="ChEBI" id="CHEBI:85413"/>
        <dbReference type="EC" id="1.14.11.55"/>
    </reaction>
</comment>
<comment type="cofactor">
    <cofactor evidence="2">
        <name>Fe(2+)</name>
        <dbReference type="ChEBI" id="CHEBI:29033"/>
    </cofactor>
    <text evidence="2">Binds 1 Fe(2+) ion.</text>
</comment>
<comment type="subunit">
    <text evidence="2">Homodimer.</text>
</comment>
<comment type="similarity">
    <text evidence="2">Belongs to the PhyH family. EctD subfamily.</text>
</comment>
<sequence>MISPAQDPYASRTDRSSAIIARQDPVVYGEGKFADALSADQVQSYERDGFLLLENLFSDEEVAALLAEVERMTRDPAIVRREEAITEPGSNAVRSIFMVHVLSPILGRLVRDPRLANAARQILGSEVYVHQSRANMKPGFKGKEFYWHSDFETWHVEDGMPSMRALSCSVLLTDNNETNGPLMLVPGSHRQFISCVGETPRDHYKQSLKKQEYGVPDPVSLQLLAEQGGISTMTGKAGSVVFFDCNTMHGSNSNISPWPRANVFMVYNSMENTLNPPKYGLNPRPEHIATRQAFKAVRPLDSLKLVER</sequence>
<gene>
    <name evidence="2" type="primary">ectD</name>
    <name type="ordered locus">BB3217</name>
</gene>
<proteinExistence type="inferred from homology"/>
<feature type="chain" id="PRO_0000215238" description="Ectoine dioxygenase">
    <location>
        <begin position="1"/>
        <end position="308"/>
    </location>
</feature>
<feature type="binding site" evidence="1">
    <location>
        <position position="131"/>
    </location>
    <ligand>
        <name>L-ectoine</name>
        <dbReference type="ChEBI" id="CHEBI:58515"/>
    </ligand>
</feature>
<feature type="binding site" evidence="1">
    <location>
        <position position="137"/>
    </location>
    <ligand>
        <name>2-oxoglutarate</name>
        <dbReference type="ChEBI" id="CHEBI:16810"/>
    </ligand>
</feature>
<feature type="binding site" evidence="2">
    <location>
        <position position="148"/>
    </location>
    <ligand>
        <name>Fe cation</name>
        <dbReference type="ChEBI" id="CHEBI:24875"/>
    </ligand>
</feature>
<feature type="binding site" evidence="2">
    <location>
        <position position="150"/>
    </location>
    <ligand>
        <name>Fe cation</name>
        <dbReference type="ChEBI" id="CHEBI:24875"/>
    </ligand>
</feature>
<feature type="binding site" evidence="2">
    <location>
        <position position="249"/>
    </location>
    <ligand>
        <name>Fe cation</name>
        <dbReference type="ChEBI" id="CHEBI:24875"/>
    </ligand>
</feature>
<feature type="site" description="Important for ectoine stabilization" evidence="1">
    <location>
        <position position="154"/>
    </location>
</feature>
<evidence type="ECO:0000250" key="1">
    <source>
        <dbReference type="UniProtKB" id="Q1GNW5"/>
    </source>
</evidence>
<evidence type="ECO:0000250" key="2">
    <source>
        <dbReference type="UniProtKB" id="Q2TDY4"/>
    </source>
</evidence>
<protein>
    <recommendedName>
        <fullName evidence="2">Ectoine dioxygenase</fullName>
        <ecNumber evidence="2">1.14.11.55</ecNumber>
    </recommendedName>
    <alternativeName>
        <fullName evidence="2">Ectoine hydroxylase</fullName>
    </alternativeName>
</protein>
<accession>Q7WHJ0</accession>
<keyword id="KW-0223">Dioxygenase</keyword>
<keyword id="KW-0408">Iron</keyword>
<keyword id="KW-0479">Metal-binding</keyword>
<keyword id="KW-0560">Oxidoreductase</keyword>
<organism>
    <name type="scientific">Bordetella bronchiseptica (strain ATCC BAA-588 / NCTC 13252 / RB50)</name>
    <name type="common">Alcaligenes bronchisepticus</name>
    <dbReference type="NCBI Taxonomy" id="257310"/>
    <lineage>
        <taxon>Bacteria</taxon>
        <taxon>Pseudomonadati</taxon>
        <taxon>Pseudomonadota</taxon>
        <taxon>Betaproteobacteria</taxon>
        <taxon>Burkholderiales</taxon>
        <taxon>Alcaligenaceae</taxon>
        <taxon>Bordetella</taxon>
    </lineage>
</organism>